<organism>
    <name type="scientific">Oryza sativa subsp. japonica</name>
    <name type="common">Rice</name>
    <dbReference type="NCBI Taxonomy" id="39947"/>
    <lineage>
        <taxon>Eukaryota</taxon>
        <taxon>Viridiplantae</taxon>
        <taxon>Streptophyta</taxon>
        <taxon>Embryophyta</taxon>
        <taxon>Tracheophyta</taxon>
        <taxon>Spermatophyta</taxon>
        <taxon>Magnoliopsida</taxon>
        <taxon>Liliopsida</taxon>
        <taxon>Poales</taxon>
        <taxon>Poaceae</taxon>
        <taxon>BOP clade</taxon>
        <taxon>Oryzoideae</taxon>
        <taxon>Oryzeae</taxon>
        <taxon>Oryzinae</taxon>
        <taxon>Oryza</taxon>
        <taxon>Oryza sativa</taxon>
    </lineage>
</organism>
<proteinExistence type="evidence at protein level"/>
<dbReference type="EC" id="4.1.3.27" evidence="5"/>
<dbReference type="EMBL" id="AB116722">
    <property type="protein sequence ID" value="BAD11024.1"/>
    <property type="molecule type" value="mRNA"/>
</dbReference>
<dbReference type="EMBL" id="DP000009">
    <property type="protein sequence ID" value="ABF98566.1"/>
    <property type="molecule type" value="Genomic_DNA"/>
</dbReference>
<dbReference type="EMBL" id="AP008209">
    <property type="protein sequence ID" value="BAF12999.1"/>
    <property type="molecule type" value="Genomic_DNA"/>
</dbReference>
<dbReference type="EMBL" id="AP014959">
    <property type="protein sequence ID" value="BAS86093.1"/>
    <property type="molecule type" value="Genomic_DNA"/>
</dbReference>
<dbReference type="EMBL" id="CM000140">
    <property type="protein sequence ID" value="EEE59817.1"/>
    <property type="molecule type" value="Genomic_DNA"/>
</dbReference>
<dbReference type="EMBL" id="AK105178">
    <property type="protein sequence ID" value="BAG97126.1"/>
    <property type="molecule type" value="mRNA"/>
</dbReference>
<dbReference type="RefSeq" id="XP_015630317.1">
    <property type="nucleotide sequence ID" value="XM_015774831.1"/>
</dbReference>
<dbReference type="SMR" id="Q764B9"/>
<dbReference type="FunCoup" id="Q764B9">
    <property type="interactions" value="250"/>
</dbReference>
<dbReference type="STRING" id="39947.Q764B9"/>
<dbReference type="MEROPS" id="C26.A09"/>
<dbReference type="PaxDb" id="39947-Q764B9"/>
<dbReference type="EnsemblPlants" id="Os03t0718000-01">
    <property type="protein sequence ID" value="Os03t0718000-01"/>
    <property type="gene ID" value="Os03g0718000"/>
</dbReference>
<dbReference type="Gramene" id="Os03t0718000-01">
    <property type="protein sequence ID" value="Os03t0718000-01"/>
    <property type="gene ID" value="Os03g0718000"/>
</dbReference>
<dbReference type="KEGG" id="dosa:Os03g0718000"/>
<dbReference type="eggNOG" id="KOG0026">
    <property type="taxonomic scope" value="Eukaryota"/>
</dbReference>
<dbReference type="HOGENOM" id="CLU_014340_1_3_1"/>
<dbReference type="InParanoid" id="Q764B9"/>
<dbReference type="OMA" id="HKRFKIE"/>
<dbReference type="OrthoDB" id="524799at2759"/>
<dbReference type="PlantReactome" id="R-OSA-1119494">
    <property type="pathway name" value="Tryptophan biosynthesis"/>
</dbReference>
<dbReference type="UniPathway" id="UPA00035">
    <property type="reaction ID" value="UER00040"/>
</dbReference>
<dbReference type="Proteomes" id="UP000000763">
    <property type="component" value="Chromosome 3"/>
</dbReference>
<dbReference type="Proteomes" id="UP000007752">
    <property type="component" value="Chromosome 3"/>
</dbReference>
<dbReference type="Proteomes" id="UP000059680">
    <property type="component" value="Chromosome 3"/>
</dbReference>
<dbReference type="GO" id="GO:0005950">
    <property type="term" value="C:anthranilate synthase complex"/>
    <property type="evidence" value="ECO:0000304"/>
    <property type="project" value="UniProtKB"/>
</dbReference>
<dbReference type="GO" id="GO:0009507">
    <property type="term" value="C:chloroplast"/>
    <property type="evidence" value="ECO:0007669"/>
    <property type="project" value="UniProtKB-SubCell"/>
</dbReference>
<dbReference type="GO" id="GO:0004049">
    <property type="term" value="F:anthranilate synthase activity"/>
    <property type="evidence" value="ECO:0000314"/>
    <property type="project" value="UniProtKB"/>
</dbReference>
<dbReference type="GO" id="GO:0000162">
    <property type="term" value="P:L-tryptophan biosynthetic process"/>
    <property type="evidence" value="ECO:0000314"/>
    <property type="project" value="UniProtKB"/>
</dbReference>
<dbReference type="CDD" id="cd01743">
    <property type="entry name" value="GATase1_Anthranilate_Synthase"/>
    <property type="match status" value="1"/>
</dbReference>
<dbReference type="FunFam" id="3.40.50.880:FF:000027">
    <property type="entry name" value="Anthranilate synthase beta subunit 1"/>
    <property type="match status" value="1"/>
</dbReference>
<dbReference type="Gene3D" id="3.40.50.880">
    <property type="match status" value="1"/>
</dbReference>
<dbReference type="InterPro" id="IPR050472">
    <property type="entry name" value="Anth_synth/Amidotransfase"/>
</dbReference>
<dbReference type="InterPro" id="IPR029062">
    <property type="entry name" value="Class_I_gatase-like"/>
</dbReference>
<dbReference type="InterPro" id="IPR017926">
    <property type="entry name" value="GATASE"/>
</dbReference>
<dbReference type="InterPro" id="IPR006221">
    <property type="entry name" value="TrpG/PapA_dom"/>
</dbReference>
<dbReference type="NCBIfam" id="TIGR00566">
    <property type="entry name" value="trpG_papA"/>
    <property type="match status" value="1"/>
</dbReference>
<dbReference type="PANTHER" id="PTHR43418:SF4">
    <property type="entry name" value="MULTIFUNCTIONAL TRYPTOPHAN BIOSYNTHESIS PROTEIN"/>
    <property type="match status" value="1"/>
</dbReference>
<dbReference type="PANTHER" id="PTHR43418">
    <property type="entry name" value="MULTIFUNCTIONAL TRYPTOPHAN BIOSYNTHESIS PROTEIN-RELATED"/>
    <property type="match status" value="1"/>
</dbReference>
<dbReference type="Pfam" id="PF00117">
    <property type="entry name" value="GATase"/>
    <property type="match status" value="1"/>
</dbReference>
<dbReference type="PRINTS" id="PR00097">
    <property type="entry name" value="ANTSNTHASEII"/>
</dbReference>
<dbReference type="PRINTS" id="PR00099">
    <property type="entry name" value="CPSGATASE"/>
</dbReference>
<dbReference type="PRINTS" id="PR00096">
    <property type="entry name" value="GATASE"/>
</dbReference>
<dbReference type="SUPFAM" id="SSF52317">
    <property type="entry name" value="Class I glutamine amidotransferase-like"/>
    <property type="match status" value="1"/>
</dbReference>
<dbReference type="PROSITE" id="PS51273">
    <property type="entry name" value="GATASE_TYPE_1"/>
    <property type="match status" value="1"/>
</dbReference>
<comment type="function">
    <text evidence="5">Part of a heterotetrameric complex that catalyzes the two-step biosynthesis of anthranilate, an intermediate in the biosynthesis of L-tryptophan. In the first step, the glutamine-binding beta subunit of anthranilate synthase (AS) provides the glutamine amidotransferase activity which generates ammonia as a substrate that, along with chorismate, is used in the second step, catalyzed by the large alpha subunit of AS to produce anthranilate.</text>
</comment>
<comment type="catalytic activity">
    <reaction evidence="5">
        <text>chorismate + L-glutamine = anthranilate + pyruvate + L-glutamate + H(+)</text>
        <dbReference type="Rhea" id="RHEA:21732"/>
        <dbReference type="ChEBI" id="CHEBI:15361"/>
        <dbReference type="ChEBI" id="CHEBI:15378"/>
        <dbReference type="ChEBI" id="CHEBI:16567"/>
        <dbReference type="ChEBI" id="CHEBI:29748"/>
        <dbReference type="ChEBI" id="CHEBI:29985"/>
        <dbReference type="ChEBI" id="CHEBI:58359"/>
        <dbReference type="EC" id="4.1.3.27"/>
    </reaction>
    <physiologicalReaction direction="left-to-right" evidence="5">
        <dbReference type="Rhea" id="RHEA:21733"/>
    </physiologicalReaction>
</comment>
<comment type="pathway">
    <text evidence="8">Amino-acid biosynthesis; L-tryptophan biosynthesis; L-tryptophan from chorismate: step 1/5.</text>
</comment>
<comment type="subunit">
    <text evidence="1">Heterotetramer consisting of two non-identical subunits: a beta subunit and a large alpha subunit.</text>
</comment>
<comment type="subcellular location">
    <subcellularLocation>
        <location evidence="2">Plastid</location>
        <location evidence="2">Chloroplast</location>
    </subcellularLocation>
</comment>
<comment type="tissue specificity">
    <text evidence="5">Expressed in roots and leaves.</text>
</comment>
<comment type="induction">
    <text evidence="5 6">By chitin oligosaccharide elicitor and the phytopathogenic fungus Bipolaris oryzae.</text>
</comment>
<accession>Q764B9</accession>
<accession>A0A0P0W2T5</accession>
<protein>
    <recommendedName>
        <fullName evidence="8">Anthranilate synthase beta subunit 2, chloroplastic</fullName>
        <shortName evidence="7">OsASB2</shortName>
        <ecNumber evidence="5">4.1.3.27</ecNumber>
    </recommendedName>
    <alternativeName>
        <fullName evidence="8">Anthranilate synthase, glutamine amidotransferase component 2-2</fullName>
    </alternativeName>
</protein>
<sequence length="273" mass="29809">MATAARLLPKIQSPASPAVAEARRRRPSSLRLGVTSGPARTLKQKLVAKSAVSVVEGENAFDGVKQDTRPIIVIDNYDSFTYNLCQYMGEVGANFEVYRNDDITVEEIKKISPRGILISPGPGTPQDSGISLQTVQDLGPSTPLFGVCMGLQCIGEAFGGKVVRSPYGVVHGKGSLVHYEEKLDGTLFSGLPNPFQAGRYHSLVIEKDSFPHDALEITAWTDDGLIMAARHRKYKHIQGVQFHPESIITTEGRLMVKNFIKIIEGYEALNCLP</sequence>
<keyword id="KW-0028">Amino-acid biosynthesis</keyword>
<keyword id="KW-0057">Aromatic amino acid biosynthesis</keyword>
<keyword id="KW-0150">Chloroplast</keyword>
<keyword id="KW-0315">Glutamine amidotransferase</keyword>
<keyword id="KW-0456">Lyase</keyword>
<keyword id="KW-0934">Plastid</keyword>
<keyword id="KW-1185">Reference proteome</keyword>
<keyword id="KW-0809">Transit peptide</keyword>
<keyword id="KW-0822">Tryptophan biosynthesis</keyword>
<feature type="transit peptide" description="Chloroplast" evidence="2">
    <location>
        <begin position="1"/>
        <end position="47"/>
    </location>
</feature>
<feature type="chain" id="PRO_0000425668" description="Anthranilate synthase beta subunit 2, chloroplastic">
    <location>
        <begin position="48"/>
        <end position="273"/>
    </location>
</feature>
<feature type="domain" description="Glutamine amidotransferase type-1" evidence="3">
    <location>
        <begin position="70"/>
        <end position="269"/>
    </location>
</feature>
<feature type="region of interest" description="Disordered" evidence="4">
    <location>
        <begin position="15"/>
        <end position="35"/>
    </location>
</feature>
<feature type="active site" description="Nucleophile" evidence="3">
    <location>
        <position position="148"/>
    </location>
</feature>
<feature type="active site" evidence="3">
    <location>
        <position position="243"/>
    </location>
</feature>
<feature type="active site" evidence="3">
    <location>
        <position position="245"/>
    </location>
</feature>
<feature type="binding site" evidence="1">
    <location>
        <begin position="121"/>
        <end position="123"/>
    </location>
    <ligand>
        <name>L-glutamine</name>
        <dbReference type="ChEBI" id="CHEBI:58359"/>
    </ligand>
</feature>
<feature type="binding site" evidence="1">
    <location>
        <position position="152"/>
    </location>
    <ligand>
        <name>L-glutamine</name>
        <dbReference type="ChEBI" id="CHEBI:58359"/>
    </ligand>
</feature>
<feature type="binding site" evidence="1">
    <location>
        <begin position="202"/>
        <end position="203"/>
    </location>
    <ligand>
        <name>L-glutamine</name>
        <dbReference type="ChEBI" id="CHEBI:58359"/>
    </ligand>
</feature>
<gene>
    <name evidence="8" type="primary">ASB2</name>
    <name evidence="7" type="synonym">OASB2</name>
    <name evidence="10" type="ordered locus">Os03g0718000</name>
    <name evidence="9" type="ordered locus">LOC_Os03g50880</name>
    <name evidence="11" type="ORF">OsJ_12361</name>
</gene>
<reference key="1">
    <citation type="journal article" date="2004" name="Plant Mol. Biol.">
        <title>In vitro reconstitution of rice anthranilate synthase: distinct functional properties of the alpha subunits OASA1 and OASA2.</title>
        <authorList>
            <person name="Kanno T."/>
            <person name="Kasai K."/>
            <person name="Ikejiri-Kanno Y."/>
            <person name="Wakasa K."/>
            <person name="Tozawa Y."/>
        </authorList>
    </citation>
    <scope>NUCLEOTIDE SEQUENCE [MRNA]</scope>
    <scope>FUNCTION</scope>
    <scope>CATALYTIC ACTIVITY</scope>
    <scope>TISSUE SPECIFICITY</scope>
    <scope>INDUCTION</scope>
    <source>
        <strain>cv. Nipponbare</strain>
    </source>
</reference>
<reference key="2">
    <citation type="journal article" date="2005" name="Genome Res.">
        <title>Sequence, annotation, and analysis of synteny between rice chromosome 3 and diverged grass species.</title>
        <authorList>
            <consortium name="The rice chromosome 3 sequencing consortium"/>
            <person name="Buell C.R."/>
            <person name="Yuan Q."/>
            <person name="Ouyang S."/>
            <person name="Liu J."/>
            <person name="Zhu W."/>
            <person name="Wang A."/>
            <person name="Maiti R."/>
            <person name="Haas B."/>
            <person name="Wortman J."/>
            <person name="Pertea M."/>
            <person name="Jones K.M."/>
            <person name="Kim M."/>
            <person name="Overton L."/>
            <person name="Tsitrin T."/>
            <person name="Fadrosh D."/>
            <person name="Bera J."/>
            <person name="Weaver B."/>
            <person name="Jin S."/>
            <person name="Johri S."/>
            <person name="Reardon M."/>
            <person name="Webb K."/>
            <person name="Hill J."/>
            <person name="Moffat K."/>
            <person name="Tallon L."/>
            <person name="Van Aken S."/>
            <person name="Lewis M."/>
            <person name="Utterback T."/>
            <person name="Feldblyum T."/>
            <person name="Zismann V."/>
            <person name="Iobst S."/>
            <person name="Hsiao J."/>
            <person name="de Vazeille A.R."/>
            <person name="Salzberg S.L."/>
            <person name="White O."/>
            <person name="Fraser C.M."/>
            <person name="Yu Y."/>
            <person name="Kim H."/>
            <person name="Rambo T."/>
            <person name="Currie J."/>
            <person name="Collura K."/>
            <person name="Kernodle-Thompson S."/>
            <person name="Wei F."/>
            <person name="Kudrna K."/>
            <person name="Ammiraju J.S.S."/>
            <person name="Luo M."/>
            <person name="Goicoechea J.L."/>
            <person name="Wing R.A."/>
            <person name="Henry D."/>
            <person name="Oates R."/>
            <person name="Palmer M."/>
            <person name="Pries G."/>
            <person name="Saski C."/>
            <person name="Simmons J."/>
            <person name="Soderlund C."/>
            <person name="Nelson W."/>
            <person name="de la Bastide M."/>
            <person name="Spiegel L."/>
            <person name="Nascimento L."/>
            <person name="Huang E."/>
            <person name="Preston R."/>
            <person name="Zutavern T."/>
            <person name="Palmer L."/>
            <person name="O'Shaughnessy A."/>
            <person name="Dike S."/>
            <person name="McCombie W.R."/>
            <person name="Minx P."/>
            <person name="Cordum H."/>
            <person name="Wilson R."/>
            <person name="Jin W."/>
            <person name="Lee H.R."/>
            <person name="Jiang J."/>
            <person name="Jackson S."/>
        </authorList>
    </citation>
    <scope>NUCLEOTIDE SEQUENCE [LARGE SCALE GENOMIC DNA]</scope>
    <source>
        <strain>cv. Nipponbare</strain>
    </source>
</reference>
<reference key="3">
    <citation type="journal article" date="2005" name="Nature">
        <title>The map-based sequence of the rice genome.</title>
        <authorList>
            <consortium name="International rice genome sequencing project (IRGSP)"/>
        </authorList>
    </citation>
    <scope>NUCLEOTIDE SEQUENCE [LARGE SCALE GENOMIC DNA]</scope>
    <source>
        <strain>cv. Nipponbare</strain>
    </source>
</reference>
<reference key="4">
    <citation type="journal article" date="2008" name="Nucleic Acids Res.">
        <title>The rice annotation project database (RAP-DB): 2008 update.</title>
        <authorList>
            <consortium name="The rice annotation project (RAP)"/>
        </authorList>
    </citation>
    <scope>GENOME REANNOTATION</scope>
    <source>
        <strain>cv. Nipponbare</strain>
    </source>
</reference>
<reference key="5">
    <citation type="journal article" date="2013" name="Rice">
        <title>Improvement of the Oryza sativa Nipponbare reference genome using next generation sequence and optical map data.</title>
        <authorList>
            <person name="Kawahara Y."/>
            <person name="de la Bastide M."/>
            <person name="Hamilton J.P."/>
            <person name="Kanamori H."/>
            <person name="McCombie W.R."/>
            <person name="Ouyang S."/>
            <person name="Schwartz D.C."/>
            <person name="Tanaka T."/>
            <person name="Wu J."/>
            <person name="Zhou S."/>
            <person name="Childs K.L."/>
            <person name="Davidson R.M."/>
            <person name="Lin H."/>
            <person name="Quesada-Ocampo L."/>
            <person name="Vaillancourt B."/>
            <person name="Sakai H."/>
            <person name="Lee S.S."/>
            <person name="Kim J."/>
            <person name="Numa H."/>
            <person name="Itoh T."/>
            <person name="Buell C.R."/>
            <person name="Matsumoto T."/>
        </authorList>
    </citation>
    <scope>GENOME REANNOTATION</scope>
    <source>
        <strain>cv. Nipponbare</strain>
    </source>
</reference>
<reference key="6">
    <citation type="journal article" date="2005" name="PLoS Biol.">
        <title>The genomes of Oryza sativa: a history of duplications.</title>
        <authorList>
            <person name="Yu J."/>
            <person name="Wang J."/>
            <person name="Lin W."/>
            <person name="Li S."/>
            <person name="Li H."/>
            <person name="Zhou J."/>
            <person name="Ni P."/>
            <person name="Dong W."/>
            <person name="Hu S."/>
            <person name="Zeng C."/>
            <person name="Zhang J."/>
            <person name="Zhang Y."/>
            <person name="Li R."/>
            <person name="Xu Z."/>
            <person name="Li S."/>
            <person name="Li X."/>
            <person name="Zheng H."/>
            <person name="Cong L."/>
            <person name="Lin L."/>
            <person name="Yin J."/>
            <person name="Geng J."/>
            <person name="Li G."/>
            <person name="Shi J."/>
            <person name="Liu J."/>
            <person name="Lv H."/>
            <person name="Li J."/>
            <person name="Wang J."/>
            <person name="Deng Y."/>
            <person name="Ran L."/>
            <person name="Shi X."/>
            <person name="Wang X."/>
            <person name="Wu Q."/>
            <person name="Li C."/>
            <person name="Ren X."/>
            <person name="Wang J."/>
            <person name="Wang X."/>
            <person name="Li D."/>
            <person name="Liu D."/>
            <person name="Zhang X."/>
            <person name="Ji Z."/>
            <person name="Zhao W."/>
            <person name="Sun Y."/>
            <person name="Zhang Z."/>
            <person name="Bao J."/>
            <person name="Han Y."/>
            <person name="Dong L."/>
            <person name="Ji J."/>
            <person name="Chen P."/>
            <person name="Wu S."/>
            <person name="Liu J."/>
            <person name="Xiao Y."/>
            <person name="Bu D."/>
            <person name="Tan J."/>
            <person name="Yang L."/>
            <person name="Ye C."/>
            <person name="Zhang J."/>
            <person name="Xu J."/>
            <person name="Zhou Y."/>
            <person name="Yu Y."/>
            <person name="Zhang B."/>
            <person name="Zhuang S."/>
            <person name="Wei H."/>
            <person name="Liu B."/>
            <person name="Lei M."/>
            <person name="Yu H."/>
            <person name="Li Y."/>
            <person name="Xu H."/>
            <person name="Wei S."/>
            <person name="He X."/>
            <person name="Fang L."/>
            <person name="Zhang Z."/>
            <person name="Zhang Y."/>
            <person name="Huang X."/>
            <person name="Su Z."/>
            <person name="Tong W."/>
            <person name="Li J."/>
            <person name="Tong Z."/>
            <person name="Li S."/>
            <person name="Ye J."/>
            <person name="Wang L."/>
            <person name="Fang L."/>
            <person name="Lei T."/>
            <person name="Chen C.-S."/>
            <person name="Chen H.-C."/>
            <person name="Xu Z."/>
            <person name="Li H."/>
            <person name="Huang H."/>
            <person name="Zhang F."/>
            <person name="Xu H."/>
            <person name="Li N."/>
            <person name="Zhao C."/>
            <person name="Li S."/>
            <person name="Dong L."/>
            <person name="Huang Y."/>
            <person name="Li L."/>
            <person name="Xi Y."/>
            <person name="Qi Q."/>
            <person name="Li W."/>
            <person name="Zhang B."/>
            <person name="Hu W."/>
            <person name="Zhang Y."/>
            <person name="Tian X."/>
            <person name="Jiao Y."/>
            <person name="Liang X."/>
            <person name="Jin J."/>
            <person name="Gao L."/>
            <person name="Zheng W."/>
            <person name="Hao B."/>
            <person name="Liu S.-M."/>
            <person name="Wang W."/>
            <person name="Yuan L."/>
            <person name="Cao M."/>
            <person name="McDermott J."/>
            <person name="Samudrala R."/>
            <person name="Wang J."/>
            <person name="Wong G.K.-S."/>
            <person name="Yang H."/>
        </authorList>
    </citation>
    <scope>NUCLEOTIDE SEQUENCE [LARGE SCALE GENOMIC DNA]</scope>
    <source>
        <strain>cv. Nipponbare</strain>
    </source>
</reference>
<reference key="7">
    <citation type="journal article" date="2003" name="Science">
        <title>Collection, mapping, and annotation of over 28,000 cDNA clones from japonica rice.</title>
        <authorList>
            <consortium name="The rice full-length cDNA consortium"/>
        </authorList>
    </citation>
    <scope>NUCLEOTIDE SEQUENCE [LARGE SCALE MRNA]</scope>
    <source>
        <strain>cv. Nipponbare</strain>
    </source>
</reference>
<reference key="8">
    <citation type="journal article" date="2008" name="Plant J.">
        <title>The tryptophan pathway is involved in the defense responses of rice against pathogenic infection via serotonin production.</title>
        <authorList>
            <person name="Ishihara A."/>
            <person name="Hashimoto Y."/>
            <person name="Tanaka C."/>
            <person name="Dubouzet J.G."/>
            <person name="Nakao T."/>
            <person name="Matsuda F."/>
            <person name="Nishioka T."/>
            <person name="Miyagawa H."/>
            <person name="Wakasa K."/>
        </authorList>
    </citation>
    <scope>INDUCTION</scope>
</reference>
<name>ASB2_ORYSJ</name>
<evidence type="ECO:0000250" key="1">
    <source>
        <dbReference type="UniProtKB" id="P00900"/>
    </source>
</evidence>
<evidence type="ECO:0000255" key="2"/>
<evidence type="ECO:0000255" key="3">
    <source>
        <dbReference type="PROSITE-ProRule" id="PRU00605"/>
    </source>
</evidence>
<evidence type="ECO:0000256" key="4">
    <source>
        <dbReference type="SAM" id="MobiDB-lite"/>
    </source>
</evidence>
<evidence type="ECO:0000269" key="5">
    <source>
    </source>
</evidence>
<evidence type="ECO:0000269" key="6">
    <source>
    </source>
</evidence>
<evidence type="ECO:0000303" key="7">
    <source>
    </source>
</evidence>
<evidence type="ECO:0000305" key="8"/>
<evidence type="ECO:0000312" key="9">
    <source>
        <dbReference type="EMBL" id="ABF98566.1"/>
    </source>
</evidence>
<evidence type="ECO:0000312" key="10">
    <source>
        <dbReference type="EMBL" id="BAS86093.1"/>
    </source>
</evidence>
<evidence type="ECO:0000312" key="11">
    <source>
        <dbReference type="EMBL" id="EEE59817.1"/>
    </source>
</evidence>